<gene>
    <name evidence="2" type="primary">OTC</name>
</gene>
<comment type="function">
    <text evidence="4 6">Catalyzes the second step of the urea cycle, the condensation of carbamoyl phosphate with L-ornithine to form L-citrulline (PubMed:14527149). The urea cycle ensures the detoxification of ammonia by converting it to urea for excretion (Probable).</text>
</comment>
<comment type="catalytic activity">
    <reaction evidence="4">
        <text>carbamoyl phosphate + L-ornithine = L-citrulline + phosphate + H(+)</text>
        <dbReference type="Rhea" id="RHEA:19513"/>
        <dbReference type="ChEBI" id="CHEBI:15378"/>
        <dbReference type="ChEBI" id="CHEBI:43474"/>
        <dbReference type="ChEBI" id="CHEBI:46911"/>
        <dbReference type="ChEBI" id="CHEBI:57743"/>
        <dbReference type="ChEBI" id="CHEBI:58228"/>
        <dbReference type="EC" id="2.1.3.3"/>
    </reaction>
    <physiologicalReaction direction="right-to-left" evidence="7">
        <dbReference type="Rhea" id="RHEA:19515"/>
    </physiologicalReaction>
</comment>
<comment type="activity regulation">
    <text evidence="2">Negatively regulated by lysine acetylation.</text>
</comment>
<comment type="pathway">
    <text evidence="7">Nitrogen metabolism; urea cycle; L-citrulline from L-ornithine and carbamoyl phosphate: step 1/1.</text>
</comment>
<comment type="subunit">
    <text evidence="4">Homotrimer.</text>
</comment>
<comment type="subcellular location">
    <subcellularLocation>
        <location evidence="2">Mitochondrion matrix</location>
    </subcellularLocation>
</comment>
<comment type="domain">
    <text evidence="5">Residues 88-96, 111-125 and 247-283 form flexible loops whose positions are affected on substrate binding.</text>
</comment>
<comment type="PTM">
    <text evidence="2">Acetylation at Lys-89 negatively regulates ornithine carbamoyltransferase activity in response to nutrient signals.</text>
</comment>
<comment type="similarity">
    <text evidence="4">Belongs to the aspartate/ornithine carbamoyltransferase superfamily. OTCase family.</text>
</comment>
<protein>
    <recommendedName>
        <fullName evidence="8">Ornithine transcarbamylase, mitochondrial</fullName>
        <shortName evidence="5">OTCase</shortName>
        <ecNumber evidence="2">2.1.3.3</ecNumber>
    </recommendedName>
    <alternativeName>
        <fullName>Ornithine carbamoyltransferase, mitochondrial</fullName>
    </alternativeName>
</protein>
<keyword id="KW-0002">3D-structure</keyword>
<keyword id="KW-0007">Acetylation</keyword>
<keyword id="KW-0028">Amino-acid biosynthesis</keyword>
<keyword id="KW-0055">Arginine biosynthesis</keyword>
<keyword id="KW-0903">Direct protein sequencing</keyword>
<keyword id="KW-0496">Mitochondrion</keyword>
<keyword id="KW-0597">Phosphoprotein</keyword>
<keyword id="KW-1185">Reference proteome</keyword>
<keyword id="KW-0808">Transferase</keyword>
<keyword id="KW-0809">Transit peptide</keyword>
<keyword id="KW-0835">Urea cycle</keyword>
<accession>P84010</accession>
<accession>W5NRA6</accession>
<feature type="transit peptide" description="Mitochondrion" evidence="4">
    <location>
        <begin position="1"/>
        <end position="35"/>
    </location>
</feature>
<feature type="chain" id="PRO_0000113081" description="Ornithine transcarbamylase, mitochondrial">
    <location>
        <begin position="36"/>
        <end position="355"/>
    </location>
</feature>
<feature type="active site" evidence="2">
    <location>
        <position position="304"/>
    </location>
</feature>
<feature type="binding site" evidence="1">
    <location>
        <begin position="91"/>
        <end position="95"/>
    </location>
    <ligand>
        <name>carbamoyl phosphate</name>
        <dbReference type="ChEBI" id="CHEBI:58228"/>
    </ligand>
</feature>
<feature type="binding site" evidence="1">
    <location>
        <position position="142"/>
    </location>
    <ligand>
        <name>carbamoyl phosphate</name>
        <dbReference type="ChEBI" id="CHEBI:58228"/>
    </ligand>
</feature>
<feature type="binding site" evidence="1">
    <location>
        <position position="142"/>
    </location>
    <ligand>
        <name>L-ornithine</name>
        <dbReference type="ChEBI" id="CHEBI:46911"/>
    </ligand>
</feature>
<feature type="binding site" evidence="1">
    <location>
        <position position="169"/>
    </location>
    <ligand>
        <name>carbamoyl phosphate</name>
        <dbReference type="ChEBI" id="CHEBI:58228"/>
    </ligand>
</feature>
<feature type="binding site" evidence="1">
    <location>
        <position position="200"/>
    </location>
    <ligand>
        <name>L-ornithine</name>
        <dbReference type="ChEBI" id="CHEBI:46911"/>
    </ligand>
</feature>
<feature type="binding site" evidence="1">
    <location>
        <begin position="264"/>
        <end position="268"/>
    </location>
    <ligand>
        <name>L-ornithine</name>
        <dbReference type="ChEBI" id="CHEBI:46911"/>
    </ligand>
</feature>
<feature type="binding site" evidence="1">
    <location>
        <begin position="303"/>
        <end position="306"/>
    </location>
    <ligand>
        <name>L-ornithine</name>
        <dbReference type="ChEBI" id="CHEBI:46911"/>
    </ligand>
</feature>
<feature type="binding site" evidence="1">
    <location>
        <position position="331"/>
    </location>
    <ligand>
        <name>carbamoyl phosphate</name>
        <dbReference type="ChEBI" id="CHEBI:58228"/>
    </ligand>
</feature>
<feature type="binding site" evidence="1">
    <location>
        <position position="331"/>
    </location>
    <ligand>
        <name>L-ornithine</name>
        <dbReference type="ChEBI" id="CHEBI:46911"/>
    </ligand>
</feature>
<feature type="modified residue" description="N6-acetyllysine; alternate" evidence="3">
    <location>
        <position position="71"/>
    </location>
</feature>
<feature type="modified residue" description="N6-succinyllysine; alternate" evidence="3">
    <location>
        <position position="71"/>
    </location>
</feature>
<feature type="modified residue" description="N6-succinyllysine" evidence="3">
    <location>
        <position position="81"/>
    </location>
</feature>
<feature type="modified residue" description="N6-acetyllysine; alternate" evidence="2">
    <location>
        <position position="89"/>
    </location>
</feature>
<feature type="modified residue" description="N6-succinyllysine; alternate" evidence="3">
    <location>
        <position position="89"/>
    </location>
</feature>
<feature type="modified residue" description="Phosphoserine" evidence="2">
    <location>
        <position position="134"/>
    </location>
</feature>
<feature type="modified residue" description="N6-acetyllysine; alternate" evidence="3">
    <location>
        <position position="145"/>
    </location>
</feature>
<feature type="modified residue" description="N6-succinyllysine; alternate" evidence="3">
    <location>
        <position position="145"/>
    </location>
</feature>
<feature type="modified residue" description="N6-acetyllysine; alternate" evidence="3">
    <location>
        <position position="222"/>
    </location>
</feature>
<feature type="modified residue" description="N6-succinyllysine; alternate" evidence="3">
    <location>
        <position position="222"/>
    </location>
</feature>
<feature type="modified residue" description="N6-acetyllysine; alternate" evidence="3">
    <location>
        <position position="232"/>
    </location>
</feature>
<feature type="modified residue" description="N6-succinyllysine; alternate" evidence="3">
    <location>
        <position position="232"/>
    </location>
</feature>
<feature type="modified residue" description="N6-acetyllysine; alternate" evidence="3">
    <location>
        <position position="239"/>
    </location>
</feature>
<feature type="modified residue" description="N6-succinyllysine; alternate" evidence="3">
    <location>
        <position position="239"/>
    </location>
</feature>
<feature type="modified residue" description="N6-acetyllysine" evidence="3">
    <location>
        <position position="244"/>
    </location>
</feature>
<feature type="modified residue" description="N6-succinyllysine" evidence="3">
    <location>
        <position position="275"/>
    </location>
</feature>
<feature type="modified residue" description="N6-succinyllysine" evidence="3">
    <location>
        <position position="290"/>
    </location>
</feature>
<feature type="modified residue" description="N6-acetyllysine; alternate" evidence="3">
    <location>
        <position position="293"/>
    </location>
</feature>
<feature type="modified residue" description="N6-succinyllysine; alternate" evidence="3">
    <location>
        <position position="293"/>
    </location>
</feature>
<feature type="modified residue" description="N6-acetyllysine; alternate" evidence="3">
    <location>
        <position position="308"/>
    </location>
</feature>
<feature type="modified residue" description="N6-succinyllysine; alternate" evidence="3">
    <location>
        <position position="308"/>
    </location>
</feature>
<feature type="helix" evidence="10">
    <location>
        <begin position="46"/>
        <end position="48"/>
    </location>
</feature>
<feature type="helix" evidence="10">
    <location>
        <begin position="51"/>
        <end position="69"/>
    </location>
</feature>
<feature type="helix" evidence="10">
    <location>
        <begin position="76"/>
        <end position="78"/>
    </location>
</feature>
<feature type="strand" evidence="10">
    <location>
        <begin position="82"/>
        <end position="89"/>
    </location>
</feature>
<feature type="helix" evidence="10">
    <location>
        <begin position="92"/>
        <end position="104"/>
    </location>
</feature>
<feature type="strand" evidence="10">
    <location>
        <begin position="108"/>
        <end position="112"/>
    </location>
</feature>
<feature type="strand" evidence="10">
    <location>
        <begin position="114"/>
        <end position="116"/>
    </location>
</feature>
<feature type="helix" evidence="10">
    <location>
        <begin position="125"/>
        <end position="134"/>
    </location>
</feature>
<feature type="strand" evidence="10">
    <location>
        <begin position="137"/>
        <end position="142"/>
    </location>
</feature>
<feature type="helix" evidence="10">
    <location>
        <begin position="146"/>
        <end position="154"/>
    </location>
</feature>
<feature type="strand" evidence="10">
    <location>
        <begin position="160"/>
        <end position="163"/>
    </location>
</feature>
<feature type="helix" evidence="10">
    <location>
        <begin position="170"/>
        <end position="184"/>
    </location>
</feature>
<feature type="strand" evidence="10">
    <location>
        <begin position="191"/>
        <end position="196"/>
    </location>
</feature>
<feature type="helix" evidence="10">
    <location>
        <begin position="200"/>
        <end position="209"/>
    </location>
</feature>
<feature type="helix" evidence="10">
    <location>
        <begin position="210"/>
        <end position="212"/>
    </location>
</feature>
<feature type="strand" evidence="10">
    <location>
        <begin position="215"/>
        <end position="219"/>
    </location>
</feature>
<feature type="helix" evidence="10">
    <location>
        <begin position="228"/>
        <end position="241"/>
    </location>
</feature>
<feature type="strand" evidence="10">
    <location>
        <begin position="245"/>
        <end position="249"/>
    </location>
</feature>
<feature type="helix" evidence="10">
    <location>
        <begin position="251"/>
        <end position="253"/>
    </location>
</feature>
<feature type="strand" evidence="10">
    <location>
        <begin position="255"/>
        <end position="257"/>
    </location>
</feature>
<feature type="strand" evidence="10">
    <location>
        <begin position="259"/>
        <end position="264"/>
    </location>
</feature>
<feature type="turn" evidence="10">
    <location>
        <begin position="273"/>
        <end position="277"/>
    </location>
</feature>
<feature type="helix" evidence="10">
    <location>
        <begin position="278"/>
        <end position="280"/>
    </location>
</feature>
<feature type="helix" evidence="10">
    <location>
        <begin position="289"/>
        <end position="294"/>
    </location>
</feature>
<feature type="strand" evidence="10">
    <location>
        <begin position="300"/>
        <end position="302"/>
    </location>
</feature>
<feature type="helix" evidence="10">
    <location>
        <begin position="309"/>
        <end position="311"/>
    </location>
</feature>
<feature type="helix" evidence="10">
    <location>
        <begin position="314"/>
        <end position="317"/>
    </location>
</feature>
<feature type="helix" evidence="10">
    <location>
        <begin position="324"/>
        <end position="343"/>
    </location>
</feature>
<proteinExistence type="evidence at protein level"/>
<reference evidence="9" key="1">
    <citation type="journal article" date="2010" name="Anim. Genet.">
        <title>The sheep genome reference sequence: a work in progress.</title>
        <authorList>
            <person name="Archibald A.L."/>
            <person name="Cockett N.E."/>
            <person name="Dalrymple B.P."/>
            <person name="Faraut T."/>
            <person name="Kijas J.W."/>
            <person name="Maddox J.F."/>
            <person name="McEwan J.C."/>
            <person name="Hutton Oddy V."/>
            <person name="Raadsma H.W."/>
            <person name="Wade C."/>
            <person name="Wang J."/>
            <person name="Wang W."/>
            <person name="Xun X."/>
        </authorList>
    </citation>
    <scope>NUCLEOTIDE SEQUENCE [LARGE SCALE GENOMIC DNA]</scope>
    <source>
        <strain>Texel</strain>
    </source>
</reference>
<reference evidence="6" key="2">
    <citation type="journal article" date="2003" name="Org. Biomol. Chem.">
        <title>Functional and structural characterization of ovine ornithine transcarbamoylase.</title>
        <authorList>
            <person name="De Gregorio A."/>
            <person name="Battistutta R."/>
            <person name="Arena N."/>
            <person name="Panzalorto M."/>
            <person name="Francescato P."/>
            <person name="Valentini G."/>
            <person name="Bruno G."/>
            <person name="Zanotti G."/>
        </authorList>
    </citation>
    <scope>X-RAY CRYSTALLOGRAPHY (3.5 ANGSTROMS) OF 36-355</scope>
    <scope>PROTEIN SEQUENCE OF 36-89</scope>
    <scope>FUNCTION</scope>
    <scope>CATALYTIC ACTIVITY</scope>
    <scope>PATHWAY</scope>
    <scope>SUBUNIT</scope>
    <scope>TRANSIT PEPTIDE</scope>
    <source>
        <tissue evidence="4">Liver</tissue>
    </source>
</reference>
<name>OTC_SHEEP</name>
<dbReference type="EC" id="2.1.3.3" evidence="2"/>
<dbReference type="EMBL" id="AMGL01114734">
    <property type="status" value="NOT_ANNOTATED_CDS"/>
    <property type="molecule type" value="Genomic_DNA"/>
</dbReference>
<dbReference type="EMBL" id="AMGL01114735">
    <property type="status" value="NOT_ANNOTATED_CDS"/>
    <property type="molecule type" value="Genomic_DNA"/>
</dbReference>
<dbReference type="RefSeq" id="XP_004022051.1">
    <property type="nucleotide sequence ID" value="XM_004022002.6"/>
</dbReference>
<dbReference type="PDB" id="1FB5">
    <property type="method" value="X-ray"/>
    <property type="resolution" value="3.50 A"/>
    <property type="chains" value="A=36-355"/>
</dbReference>
<dbReference type="PDBsum" id="1FB5"/>
<dbReference type="SMR" id="P84010"/>
<dbReference type="STRING" id="9940.ENSOARP00000000696"/>
<dbReference type="PaxDb" id="9940-ENSOARP00000000696"/>
<dbReference type="Ensembl" id="ENSOART00040040624">
    <property type="protein sequence ID" value="ENSOARP00040021048"/>
    <property type="gene ID" value="ENSOARG00040024372"/>
</dbReference>
<dbReference type="Ensembl" id="ENSOART00215080981">
    <property type="protein sequence ID" value="ENSOARP00215044822"/>
    <property type="gene ID" value="ENSOARG00215047605"/>
</dbReference>
<dbReference type="Ensembl" id="ENSOART00220080020">
    <property type="protein sequence ID" value="ENSOARP00220042938"/>
    <property type="gene ID" value="ENSOARG00220048133"/>
</dbReference>
<dbReference type="Ensembl" id="ENSOART00225097277">
    <property type="protein sequence ID" value="ENSOARP00225051676"/>
    <property type="gene ID" value="ENSOARG00225058235"/>
</dbReference>
<dbReference type="Ensembl" id="ENSOART00260026930">
    <property type="protein sequence ID" value="ENSOARP00260013481"/>
    <property type="gene ID" value="ENSOARG00260016652"/>
</dbReference>
<dbReference type="GeneID" id="101102207"/>
<dbReference type="KEGG" id="oas:101102207"/>
<dbReference type="CTD" id="5009"/>
<dbReference type="eggNOG" id="KOG1504">
    <property type="taxonomic scope" value="Eukaryota"/>
</dbReference>
<dbReference type="HOGENOM" id="CLU_043846_3_0_1"/>
<dbReference type="OMA" id="DGNNVCN"/>
<dbReference type="OrthoDB" id="10252326at2759"/>
<dbReference type="UniPathway" id="UPA00158">
    <property type="reaction ID" value="UER00271"/>
</dbReference>
<dbReference type="EvolutionaryTrace" id="P84010"/>
<dbReference type="Proteomes" id="UP000002356">
    <property type="component" value="Chromosome X"/>
</dbReference>
<dbReference type="Bgee" id="ENSOARG00000000678">
    <property type="expression patterns" value="Expressed in jejunum and 41 other cell types or tissues"/>
</dbReference>
<dbReference type="GO" id="GO:0005743">
    <property type="term" value="C:mitochondrial inner membrane"/>
    <property type="evidence" value="ECO:0000250"/>
    <property type="project" value="AgBase"/>
</dbReference>
<dbReference type="GO" id="GO:0005759">
    <property type="term" value="C:mitochondrial matrix"/>
    <property type="evidence" value="ECO:0007669"/>
    <property type="project" value="UniProtKB-SubCell"/>
</dbReference>
<dbReference type="GO" id="GO:0005739">
    <property type="term" value="C:mitochondrion"/>
    <property type="evidence" value="ECO:0000250"/>
    <property type="project" value="AgBase"/>
</dbReference>
<dbReference type="GO" id="GO:0016597">
    <property type="term" value="F:amino acid binding"/>
    <property type="evidence" value="ECO:0007669"/>
    <property type="project" value="InterPro"/>
</dbReference>
<dbReference type="GO" id="GO:0004585">
    <property type="term" value="F:ornithine carbamoyltransferase activity"/>
    <property type="evidence" value="ECO:0007669"/>
    <property type="project" value="UniProtKB-EC"/>
</dbReference>
<dbReference type="GO" id="GO:0042450">
    <property type="term" value="P:arginine biosynthetic process via ornithine"/>
    <property type="evidence" value="ECO:0007669"/>
    <property type="project" value="TreeGrafter"/>
</dbReference>
<dbReference type="GO" id="GO:0019240">
    <property type="term" value="P:citrulline biosynthetic process"/>
    <property type="evidence" value="ECO:0007669"/>
    <property type="project" value="TreeGrafter"/>
</dbReference>
<dbReference type="GO" id="GO:0006526">
    <property type="term" value="P:L-arginine biosynthetic process"/>
    <property type="evidence" value="ECO:0007669"/>
    <property type="project" value="UniProtKB-KW"/>
</dbReference>
<dbReference type="GO" id="GO:0000050">
    <property type="term" value="P:urea cycle"/>
    <property type="evidence" value="ECO:0007669"/>
    <property type="project" value="UniProtKB-UniPathway"/>
</dbReference>
<dbReference type="FunFam" id="3.40.50.1370:FF:000009">
    <property type="entry name" value="Ornithine carbamoyltransferase, mitochondrial"/>
    <property type="match status" value="1"/>
</dbReference>
<dbReference type="FunFam" id="3.40.50.1370:FF:000010">
    <property type="entry name" value="Ornithine carbamoyltransferase, mitochondrial"/>
    <property type="match status" value="1"/>
</dbReference>
<dbReference type="Gene3D" id="3.40.50.1370">
    <property type="entry name" value="Aspartate/ornithine carbamoyltransferase"/>
    <property type="match status" value="2"/>
</dbReference>
<dbReference type="InterPro" id="IPR006132">
    <property type="entry name" value="Asp/Orn_carbamoyltranf_P-bd"/>
</dbReference>
<dbReference type="InterPro" id="IPR006130">
    <property type="entry name" value="Asp/Orn_carbamoylTrfase"/>
</dbReference>
<dbReference type="InterPro" id="IPR036901">
    <property type="entry name" value="Asp/Orn_carbamoylTrfase_sf"/>
</dbReference>
<dbReference type="InterPro" id="IPR006131">
    <property type="entry name" value="Asp_carbamoyltransf_Asp/Orn-bd"/>
</dbReference>
<dbReference type="InterPro" id="IPR002292">
    <property type="entry name" value="Orn/put_carbamltrans"/>
</dbReference>
<dbReference type="NCBIfam" id="TIGR00658">
    <property type="entry name" value="orni_carb_tr"/>
    <property type="match status" value="1"/>
</dbReference>
<dbReference type="NCBIfam" id="NF001986">
    <property type="entry name" value="PRK00779.1"/>
    <property type="match status" value="1"/>
</dbReference>
<dbReference type="PANTHER" id="PTHR45753">
    <property type="entry name" value="ORNITHINE CARBAMOYLTRANSFERASE, MITOCHONDRIAL"/>
    <property type="match status" value="1"/>
</dbReference>
<dbReference type="PANTHER" id="PTHR45753:SF3">
    <property type="entry name" value="ORNITHINE TRANSCARBAMYLASE, MITOCHONDRIAL"/>
    <property type="match status" value="1"/>
</dbReference>
<dbReference type="Pfam" id="PF00185">
    <property type="entry name" value="OTCace"/>
    <property type="match status" value="1"/>
</dbReference>
<dbReference type="Pfam" id="PF02729">
    <property type="entry name" value="OTCace_N"/>
    <property type="match status" value="1"/>
</dbReference>
<dbReference type="PRINTS" id="PR00100">
    <property type="entry name" value="AOTCASE"/>
</dbReference>
<dbReference type="PRINTS" id="PR00102">
    <property type="entry name" value="OTCASE"/>
</dbReference>
<dbReference type="SUPFAM" id="SSF53671">
    <property type="entry name" value="Aspartate/ornithine carbamoyltransferase"/>
    <property type="match status" value="1"/>
</dbReference>
<dbReference type="PROSITE" id="PS00097">
    <property type="entry name" value="CARBAMOYLTRANSFERASE"/>
    <property type="match status" value="1"/>
</dbReference>
<organism>
    <name type="scientific">Ovis aries</name>
    <name type="common">Sheep</name>
    <dbReference type="NCBI Taxonomy" id="9940"/>
    <lineage>
        <taxon>Eukaryota</taxon>
        <taxon>Metazoa</taxon>
        <taxon>Chordata</taxon>
        <taxon>Craniata</taxon>
        <taxon>Vertebrata</taxon>
        <taxon>Euteleostomi</taxon>
        <taxon>Mammalia</taxon>
        <taxon>Eutheria</taxon>
        <taxon>Laurasiatheria</taxon>
        <taxon>Artiodactyla</taxon>
        <taxon>Ruminantia</taxon>
        <taxon>Pecora</taxon>
        <taxon>Bovidae</taxon>
        <taxon>Caprinae</taxon>
        <taxon>Ovis</taxon>
    </lineage>
</organism>
<sequence>MLFINLRTLLNNAALRNGHNFVVRNFRCGQPVQDKVQLKGRDLLTLKNFTGEEIKYMLWLSADLKFRIKQKGEYLPLLQGKSLGMIFEKRSTRTRLSTETGFALLGGHPCFLTTDDIHLGVNESLTDTARVLSSMTDAVLARVYKQSDLDILAKEASIPIVNGLSDLYHPIQILADYLTLQEHYGSLKGLTLSWIGDGNNILHSIMMSAAKFGMHLQVATPKGYEPDPSITKLAEQYAKENGTKLSLTNDPLEAACGGNVLITDTWISMGQEEEKKKRLQAFQGYQVTMKTAKVAAPDWTFLHCLPRKPEEVDDEVFYSPRSLVFPEAENRKWTIMAVMVSLLTDYSPQLQKPKF</sequence>
<evidence type="ECO:0000250" key="1"/>
<evidence type="ECO:0000250" key="2">
    <source>
        <dbReference type="UniProtKB" id="P00480"/>
    </source>
</evidence>
<evidence type="ECO:0000250" key="3">
    <source>
        <dbReference type="UniProtKB" id="P11725"/>
    </source>
</evidence>
<evidence type="ECO:0000269" key="4">
    <source>
    </source>
</evidence>
<evidence type="ECO:0000303" key="5">
    <source>
    </source>
</evidence>
<evidence type="ECO:0000305" key="6"/>
<evidence type="ECO:0000305" key="7">
    <source>
    </source>
</evidence>
<evidence type="ECO:0000305" key="8">
    <source>
    </source>
</evidence>
<evidence type="ECO:0000312" key="9">
    <source>
        <dbReference type="Proteomes" id="UP000002356"/>
    </source>
</evidence>
<evidence type="ECO:0007829" key="10">
    <source>
        <dbReference type="PDB" id="1FB5"/>
    </source>
</evidence>